<feature type="signal peptide" evidence="2">
    <location>
        <begin position="1"/>
        <end position="17"/>
    </location>
</feature>
<feature type="chain" id="PRO_0000429754" description="ZP domain-containing protein" evidence="2">
    <location>
        <begin position="18"/>
        <end position="414"/>
    </location>
</feature>
<feature type="topological domain" description="Extracellular" evidence="2">
    <location>
        <begin position="18"/>
        <end position="364"/>
    </location>
</feature>
<feature type="transmembrane region" description="Helical" evidence="2">
    <location>
        <begin position="365"/>
        <end position="385"/>
    </location>
</feature>
<feature type="topological domain" description="Cytoplasmic" evidence="2">
    <location>
        <begin position="386"/>
        <end position="414"/>
    </location>
</feature>
<feature type="domain" description="ZP" evidence="3">
    <location>
        <begin position="70"/>
        <end position="323"/>
    </location>
</feature>
<feature type="region of interest" description="Disordered" evidence="4">
    <location>
        <begin position="18"/>
        <end position="65"/>
    </location>
</feature>
<feature type="compositionally biased region" description="Low complexity" evidence="4">
    <location>
        <begin position="39"/>
        <end position="57"/>
    </location>
</feature>
<feature type="disulfide bond" evidence="1">
    <location>
        <begin position="241"/>
        <end position="302"/>
    </location>
</feature>
<reference evidence="8" key="1">
    <citation type="journal article" date="2011" name="PLoS ONE">
        <title>Differential gene expression at coral settlement and metamorphosis - a subtractive hybridization study.</title>
        <authorList>
            <person name="Hayward D.C."/>
            <person name="Hetherington S."/>
            <person name="Behm C.A."/>
            <person name="Grasso L.C."/>
            <person name="Foret S."/>
            <person name="Miller D.J."/>
            <person name="Ball E.E."/>
        </authorList>
    </citation>
    <scope>NUCLEOTIDE SEQUENCE [MRNA]</scope>
</reference>
<reference evidence="7" key="2">
    <citation type="journal article" date="2013" name="Mol. Biol. Evol.">
        <title>The skeletal proteome of the coral Acropora millepora: the evolution of calcification by co-option and domain shuffling.</title>
        <authorList>
            <person name="Ramos-Silva P."/>
            <person name="Kaandorp J."/>
            <person name="Huisman L."/>
            <person name="Marie B."/>
            <person name="Zanella-Cleon I."/>
            <person name="Guichard N."/>
            <person name="Miller D.J."/>
            <person name="Marin F."/>
        </authorList>
    </citation>
    <scope>PROTEIN SEQUENCE OF 142-153; 166-173 AND 214-227</scope>
    <scope>TISSUE SPECIFICITY</scope>
    <scope>IDENTIFICATION BY MASS SPECTROMETRY</scope>
</reference>
<organism>
    <name type="scientific">Acropora millepora</name>
    <name type="common">Staghorn coral</name>
    <name type="synonym">Heteropora millepora</name>
    <dbReference type="NCBI Taxonomy" id="45264"/>
    <lineage>
        <taxon>Eukaryota</taxon>
        <taxon>Metazoa</taxon>
        <taxon>Cnidaria</taxon>
        <taxon>Anthozoa</taxon>
        <taxon>Hexacorallia</taxon>
        <taxon>Scleractinia</taxon>
        <taxon>Astrocoeniina</taxon>
        <taxon>Acroporidae</taxon>
        <taxon>Acropora</taxon>
    </lineage>
</organism>
<keyword id="KW-0903">Direct protein sequencing</keyword>
<keyword id="KW-1015">Disulfide bond</keyword>
<keyword id="KW-0472">Membrane</keyword>
<keyword id="KW-0732">Signal</keyword>
<keyword id="KW-0812">Transmembrane</keyword>
<keyword id="KW-1133">Transmembrane helix</keyword>
<name>ZPP_ACRMI</name>
<dbReference type="EMBL" id="JN631095">
    <property type="protein sequence ID" value="AET09743.1"/>
    <property type="molecule type" value="mRNA"/>
</dbReference>
<dbReference type="RefSeq" id="XP_029195765.2">
    <property type="nucleotide sequence ID" value="XM_029339932.2"/>
</dbReference>
<dbReference type="SMR" id="G8HTB6"/>
<dbReference type="EnsemblMetazoa" id="XM_029339932.2">
    <property type="protein sequence ID" value="XP_029195765.2"/>
    <property type="gene ID" value="LOC114961281"/>
</dbReference>
<dbReference type="GeneID" id="114961281"/>
<dbReference type="OrthoDB" id="5965424at2759"/>
<dbReference type="GO" id="GO:0016020">
    <property type="term" value="C:membrane"/>
    <property type="evidence" value="ECO:0007669"/>
    <property type="project" value="UniProtKB-SubCell"/>
</dbReference>
<dbReference type="Gene3D" id="2.60.40.4100">
    <property type="entry name" value="Zona pellucida, ZP-C domain"/>
    <property type="match status" value="1"/>
</dbReference>
<dbReference type="Gene3D" id="2.60.40.3210">
    <property type="entry name" value="Zona pellucida, ZP-N domain"/>
    <property type="match status" value="1"/>
</dbReference>
<dbReference type="InterPro" id="IPR055355">
    <property type="entry name" value="ZP-C"/>
</dbReference>
<dbReference type="InterPro" id="IPR042235">
    <property type="entry name" value="ZP-C_dom"/>
</dbReference>
<dbReference type="InterPro" id="IPR055356">
    <property type="entry name" value="ZP-N"/>
</dbReference>
<dbReference type="InterPro" id="IPR001507">
    <property type="entry name" value="ZP_dom"/>
</dbReference>
<dbReference type="PANTHER" id="PTHR14002:SF43">
    <property type="entry name" value="DELTA-LIKE PROTEIN"/>
    <property type="match status" value="1"/>
</dbReference>
<dbReference type="PANTHER" id="PTHR14002">
    <property type="entry name" value="ENDOGLIN/TGF-BETA RECEPTOR TYPE III"/>
    <property type="match status" value="1"/>
</dbReference>
<dbReference type="Pfam" id="PF00100">
    <property type="entry name" value="Zona_pellucida"/>
    <property type="match status" value="1"/>
</dbReference>
<dbReference type="Pfam" id="PF23344">
    <property type="entry name" value="ZP-N"/>
    <property type="match status" value="1"/>
</dbReference>
<dbReference type="SMART" id="SM00241">
    <property type="entry name" value="ZP"/>
    <property type="match status" value="1"/>
</dbReference>
<dbReference type="PROSITE" id="PS51034">
    <property type="entry name" value="ZP_2"/>
    <property type="match status" value="1"/>
</dbReference>
<comment type="subcellular location">
    <subcellularLocation>
        <location evidence="2">Membrane</location>
        <topology evidence="2">Single-pass membrane protein</topology>
    </subcellularLocation>
    <text evidence="2 6">Presence in the organic matrix of the skeleton may be due to shedding of a soluble peptide.</text>
</comment>
<comment type="tissue specificity">
    <text evidence="5">Component of the acid-insoluble and acid-soluble organic matrix of the aragonitic skeleton (at protein level).</text>
</comment>
<proteinExistence type="evidence at protein level"/>
<protein>
    <recommendedName>
        <fullName evidence="6">ZP domain-containing protein</fullName>
    </recommendedName>
</protein>
<accession>G8HTB6</accession>
<sequence length="414" mass="45707">MFLYSFVFLMLLGLSSAQTESATSPDEVETEPTMSTDQPETSPSMSTETEPTTETPPVTTPPPPDSLSVICTNEKMEVFLDHAKHDNLDLDKVTLKDANCKASGTLNATHLWMDVPFDSCMTNHSTDGDTITYQNSLVAETRASAGSSLISREFQAEFPFKCTYPRSAVLSVVAFSPRERIVYTKTAEFGNFTFTMDMYKTDKYETPYDSFPVRLDLDDPMFLEVKVSSNDSKLVLIPLKCWATPSSDLQDDKYYTFIENGCGKADDPSLVFNYGESNVQRFKIGAFRFIGESLNSNVYLHCDVEACRKGDSDSRCAKGCETSRRRRRSSLASSAGTEQTVTLGPMKISEKAEVGAQEAVSSLTIFAAVAGVLGVIVLFLAVALVMLYKRYRSPQSATRVVYTKTANEEGKLLV</sequence>
<evidence type="ECO:0000250" key="1"/>
<evidence type="ECO:0000255" key="2"/>
<evidence type="ECO:0000255" key="3">
    <source>
        <dbReference type="PROSITE-ProRule" id="PRU00375"/>
    </source>
</evidence>
<evidence type="ECO:0000256" key="4">
    <source>
        <dbReference type="SAM" id="MobiDB-lite"/>
    </source>
</evidence>
<evidence type="ECO:0000269" key="5">
    <source>
    </source>
</evidence>
<evidence type="ECO:0000303" key="6">
    <source>
    </source>
</evidence>
<evidence type="ECO:0000305" key="7"/>
<evidence type="ECO:0000312" key="8">
    <source>
        <dbReference type="EMBL" id="AET09743.1"/>
    </source>
</evidence>